<feature type="initiator methionine" description="Removed" evidence="1">
    <location>
        <position position="1"/>
    </location>
</feature>
<feature type="chain" id="PRO_0000194586" description="Regulatory protein SoxS">
    <location>
        <begin position="2"/>
        <end position="107"/>
    </location>
</feature>
<feature type="domain" description="HTH araC/xylS-type" evidence="2">
    <location>
        <begin position="8"/>
        <end position="106"/>
    </location>
</feature>
<feature type="DNA-binding region" description="H-T-H motif" evidence="2">
    <location>
        <begin position="25"/>
        <end position="46"/>
    </location>
</feature>
<feature type="DNA-binding region" description="H-T-H motif" evidence="2">
    <location>
        <begin position="73"/>
        <end position="96"/>
    </location>
</feature>
<organism>
    <name type="scientific">Salmonella typhimurium (strain LT2 / SGSC1412 / ATCC 700720)</name>
    <dbReference type="NCBI Taxonomy" id="99287"/>
    <lineage>
        <taxon>Bacteria</taxon>
        <taxon>Pseudomonadati</taxon>
        <taxon>Pseudomonadota</taxon>
        <taxon>Gammaproteobacteria</taxon>
        <taxon>Enterobacterales</taxon>
        <taxon>Enterobacteriaceae</taxon>
        <taxon>Salmonella</taxon>
    </lineage>
</organism>
<dbReference type="EMBL" id="U61147">
    <property type="protein sequence ID" value="AAB03868.1"/>
    <property type="molecule type" value="Genomic_DNA"/>
</dbReference>
<dbReference type="EMBL" id="AE006468">
    <property type="protein sequence ID" value="AAL23089.1"/>
    <property type="molecule type" value="Genomic_DNA"/>
</dbReference>
<dbReference type="RefSeq" id="NP_463130.1">
    <property type="nucleotide sequence ID" value="NC_003197.2"/>
</dbReference>
<dbReference type="RefSeq" id="WP_000019483.1">
    <property type="nucleotide sequence ID" value="NC_003197.2"/>
</dbReference>
<dbReference type="SMR" id="Q56143"/>
<dbReference type="STRING" id="99287.STM4265"/>
<dbReference type="PaxDb" id="99287-STM4265"/>
<dbReference type="GeneID" id="1255791"/>
<dbReference type="KEGG" id="stm:STM4265"/>
<dbReference type="PATRIC" id="fig|99287.12.peg.4486"/>
<dbReference type="HOGENOM" id="CLU_000445_81_14_6"/>
<dbReference type="OMA" id="QTQRPVF"/>
<dbReference type="PhylomeDB" id="Q56143"/>
<dbReference type="BioCyc" id="SENT99287:STM4265-MONOMER"/>
<dbReference type="Proteomes" id="UP000001014">
    <property type="component" value="Chromosome"/>
</dbReference>
<dbReference type="GO" id="GO:0005829">
    <property type="term" value="C:cytosol"/>
    <property type="evidence" value="ECO:0000318"/>
    <property type="project" value="GO_Central"/>
</dbReference>
<dbReference type="GO" id="GO:0001108">
    <property type="term" value="F:bacterial-type RNA polymerase holo enzyme binding"/>
    <property type="evidence" value="ECO:0000318"/>
    <property type="project" value="GO_Central"/>
</dbReference>
<dbReference type="GO" id="GO:0003700">
    <property type="term" value="F:DNA-binding transcription factor activity"/>
    <property type="evidence" value="ECO:0007669"/>
    <property type="project" value="InterPro"/>
</dbReference>
<dbReference type="GO" id="GO:0043565">
    <property type="term" value="F:sequence-specific DNA binding"/>
    <property type="evidence" value="ECO:0000318"/>
    <property type="project" value="GO_Central"/>
</dbReference>
<dbReference type="GO" id="GO:0006355">
    <property type="term" value="P:regulation of DNA-templated transcription"/>
    <property type="evidence" value="ECO:0000318"/>
    <property type="project" value="GO_Central"/>
</dbReference>
<dbReference type="FunFam" id="1.10.10.60:FF:000030">
    <property type="entry name" value="DNA-binding transcriptional regulator SoxS"/>
    <property type="match status" value="1"/>
</dbReference>
<dbReference type="Gene3D" id="1.10.10.60">
    <property type="entry name" value="Homeodomain-like"/>
    <property type="match status" value="2"/>
</dbReference>
<dbReference type="InterPro" id="IPR009057">
    <property type="entry name" value="Homeodomain-like_sf"/>
</dbReference>
<dbReference type="InterPro" id="IPR018060">
    <property type="entry name" value="HTH_AraC"/>
</dbReference>
<dbReference type="InterPro" id="IPR018062">
    <property type="entry name" value="HTH_AraC-typ_CS"/>
</dbReference>
<dbReference type="InterPro" id="IPR050959">
    <property type="entry name" value="MarA-like"/>
</dbReference>
<dbReference type="InterPro" id="IPR020449">
    <property type="entry name" value="Tscrpt_reg_AraC-type_HTH"/>
</dbReference>
<dbReference type="NCBIfam" id="NF007584">
    <property type="entry name" value="PRK10219.1"/>
    <property type="match status" value="1"/>
</dbReference>
<dbReference type="PANTHER" id="PTHR47504:SF2">
    <property type="entry name" value="REGULATORY PROTEIN SOXS"/>
    <property type="match status" value="1"/>
</dbReference>
<dbReference type="PANTHER" id="PTHR47504">
    <property type="entry name" value="RIGHT ORIGIN-BINDING PROTEIN"/>
    <property type="match status" value="1"/>
</dbReference>
<dbReference type="Pfam" id="PF12833">
    <property type="entry name" value="HTH_18"/>
    <property type="match status" value="1"/>
</dbReference>
<dbReference type="PRINTS" id="PR00032">
    <property type="entry name" value="HTHARAC"/>
</dbReference>
<dbReference type="SMART" id="SM00342">
    <property type="entry name" value="HTH_ARAC"/>
    <property type="match status" value="1"/>
</dbReference>
<dbReference type="SUPFAM" id="SSF46689">
    <property type="entry name" value="Homeodomain-like"/>
    <property type="match status" value="2"/>
</dbReference>
<dbReference type="PROSITE" id="PS00041">
    <property type="entry name" value="HTH_ARAC_FAMILY_1"/>
    <property type="match status" value="1"/>
</dbReference>
<dbReference type="PROSITE" id="PS01124">
    <property type="entry name" value="HTH_ARAC_FAMILY_2"/>
    <property type="match status" value="1"/>
</dbReference>
<reference key="1">
    <citation type="submission" date="1996-06" db="EMBL/GenBank/DDBJ databases">
        <authorList>
            <person name="Martins E.A.L."/>
            <person name="Demple B."/>
        </authorList>
    </citation>
    <scope>NUCLEOTIDE SEQUENCE [GENOMIC DNA]</scope>
    <source>
        <strain>LT2</strain>
    </source>
</reference>
<reference key="2">
    <citation type="journal article" date="2001" name="Nature">
        <title>Complete genome sequence of Salmonella enterica serovar Typhimurium LT2.</title>
        <authorList>
            <person name="McClelland M."/>
            <person name="Sanderson K.E."/>
            <person name="Spieth J."/>
            <person name="Clifton S.W."/>
            <person name="Latreille P."/>
            <person name="Courtney L."/>
            <person name="Porwollik S."/>
            <person name="Ali J."/>
            <person name="Dante M."/>
            <person name="Du F."/>
            <person name="Hou S."/>
            <person name="Layman D."/>
            <person name="Leonard S."/>
            <person name="Nguyen C."/>
            <person name="Scott K."/>
            <person name="Holmes A."/>
            <person name="Grewal N."/>
            <person name="Mulvaney E."/>
            <person name="Ryan E."/>
            <person name="Sun H."/>
            <person name="Florea L."/>
            <person name="Miller W."/>
            <person name="Stoneking T."/>
            <person name="Nhan M."/>
            <person name="Waterston R."/>
            <person name="Wilson R.K."/>
        </authorList>
    </citation>
    <scope>NUCLEOTIDE SEQUENCE [LARGE SCALE GENOMIC DNA]</scope>
    <source>
        <strain>LT2 / SGSC1412 / ATCC 700720</strain>
    </source>
</reference>
<protein>
    <recommendedName>
        <fullName>Regulatory protein SoxS</fullName>
    </recommendedName>
</protein>
<comment type="function">
    <text evidence="1">Transcriptional activator of the superoxide response regulon of E.coli that includes at least 10 genes such as sodA, nfo, zwf and micF. Binds the DNA sequence 5'-GCACN(7)CAA-3'. It also facilitates the subsequent binding of RNA polymerase to the micF and the nfo promoters (By similarity).</text>
</comment>
<comment type="subcellular location">
    <subcellularLocation>
        <location>Cytoplasm</location>
    </subcellularLocation>
</comment>
<sequence length="107" mass="12970">MSHQQIIQTLIEWIDEHIDQPLNIDVVAKKSGYSKWYLQRMFRTVTHQTLGEYIRQRRLLLAAVELRTTERPIFDIAMDLGYVSQQTFSRVFRREFDRTPSDYRHRL</sequence>
<proteinExistence type="inferred from homology"/>
<gene>
    <name type="primary">soxS</name>
    <name type="ordered locus">STM4265</name>
</gene>
<evidence type="ECO:0000250" key="1"/>
<evidence type="ECO:0000255" key="2">
    <source>
        <dbReference type="PROSITE-ProRule" id="PRU00593"/>
    </source>
</evidence>
<keyword id="KW-0010">Activator</keyword>
<keyword id="KW-0963">Cytoplasm</keyword>
<keyword id="KW-0238">DNA-binding</keyword>
<keyword id="KW-1185">Reference proteome</keyword>
<keyword id="KW-0804">Transcription</keyword>
<keyword id="KW-0805">Transcription regulation</keyword>
<accession>Q56143</accession>
<name>SOXS_SALTY</name>